<reference key="1">
    <citation type="journal article" date="2002" name="Proc. Natl. Acad. Sci. U.S.A.">
        <title>Extensive mosaic structure revealed by the complete genome sequence of uropathogenic Escherichia coli.</title>
        <authorList>
            <person name="Welch R.A."/>
            <person name="Burland V."/>
            <person name="Plunkett G. III"/>
            <person name="Redford P."/>
            <person name="Roesch P."/>
            <person name="Rasko D."/>
            <person name="Buckles E.L."/>
            <person name="Liou S.-R."/>
            <person name="Boutin A."/>
            <person name="Hackett J."/>
            <person name="Stroud D."/>
            <person name="Mayhew G.F."/>
            <person name="Rose D.J."/>
            <person name="Zhou S."/>
            <person name="Schwartz D.C."/>
            <person name="Perna N.T."/>
            <person name="Mobley H.L.T."/>
            <person name="Donnenberg M.S."/>
            <person name="Blattner F.R."/>
        </authorList>
    </citation>
    <scope>NUCLEOTIDE SEQUENCE [LARGE SCALE GENOMIC DNA]</scope>
    <source>
        <strain>CFT073 / ATCC 700928 / UPEC</strain>
    </source>
</reference>
<gene>
    <name evidence="1" type="primary">citX</name>
    <name type="ordered locus">c0702</name>
</gene>
<accession>Q8FK03</accession>
<comment type="function">
    <text evidence="1">Transfers 2-(5''-triphosphoribosyl)-3'-dephosphocoenzyme-A on a serine residue to the apo-acyl carrier protein (gamma chain) of the citrate lyase to yield holo-acyl carrier protein.</text>
</comment>
<comment type="catalytic activity">
    <reaction evidence="1">
        <text>apo-[citrate lyase ACP] + 2'-(5''-triphospho-alpha-D-ribosyl)-3'-dephospho-CoA = holo-[citrate lyase ACP] + diphosphate</text>
        <dbReference type="Rhea" id="RHEA:16333"/>
        <dbReference type="Rhea" id="RHEA-COMP:10157"/>
        <dbReference type="Rhea" id="RHEA-COMP:10158"/>
        <dbReference type="ChEBI" id="CHEBI:29999"/>
        <dbReference type="ChEBI" id="CHEBI:33019"/>
        <dbReference type="ChEBI" id="CHEBI:61378"/>
        <dbReference type="ChEBI" id="CHEBI:82683"/>
        <dbReference type="EC" id="2.7.7.61"/>
    </reaction>
</comment>
<comment type="similarity">
    <text evidence="1">Belongs to the CitX family.</text>
</comment>
<organism>
    <name type="scientific">Escherichia coli O6:H1 (strain CFT073 / ATCC 700928 / UPEC)</name>
    <dbReference type="NCBI Taxonomy" id="199310"/>
    <lineage>
        <taxon>Bacteria</taxon>
        <taxon>Pseudomonadati</taxon>
        <taxon>Pseudomonadota</taxon>
        <taxon>Gammaproteobacteria</taxon>
        <taxon>Enterobacterales</taxon>
        <taxon>Enterobacteriaceae</taxon>
        <taxon>Escherichia</taxon>
    </lineage>
</organism>
<keyword id="KW-0548">Nucleotidyltransferase</keyword>
<keyword id="KW-1185">Reference proteome</keyword>
<keyword id="KW-0808">Transferase</keyword>
<feature type="chain" id="PRO_0000214687" description="Apo-citrate lyase phosphoribosyl-dephospho-CoA transferase">
    <location>
        <begin position="1"/>
        <end position="183"/>
    </location>
</feature>
<dbReference type="EC" id="2.7.7.61" evidence="1"/>
<dbReference type="EMBL" id="AE014075">
    <property type="protein sequence ID" value="AAN79177.1"/>
    <property type="molecule type" value="Genomic_DNA"/>
</dbReference>
<dbReference type="RefSeq" id="WP_000550407.1">
    <property type="nucleotide sequence ID" value="NZ_CP051263.1"/>
</dbReference>
<dbReference type="SMR" id="Q8FK03"/>
<dbReference type="STRING" id="199310.c0702"/>
<dbReference type="KEGG" id="ecc:c0702"/>
<dbReference type="eggNOG" id="COG3697">
    <property type="taxonomic scope" value="Bacteria"/>
</dbReference>
<dbReference type="HOGENOM" id="CLU_104529_1_1_6"/>
<dbReference type="BioCyc" id="ECOL199310:C0702-MONOMER"/>
<dbReference type="Proteomes" id="UP000001410">
    <property type="component" value="Chromosome"/>
</dbReference>
<dbReference type="GO" id="GO:0050519">
    <property type="term" value="F:holo-citrate lyase synthase activity"/>
    <property type="evidence" value="ECO:0007669"/>
    <property type="project" value="UniProtKB-UniRule"/>
</dbReference>
<dbReference type="GO" id="GO:0051191">
    <property type="term" value="P:prosthetic group biosynthetic process"/>
    <property type="evidence" value="ECO:0007669"/>
    <property type="project" value="InterPro"/>
</dbReference>
<dbReference type="HAMAP" id="MF_00398">
    <property type="entry name" value="CitX"/>
    <property type="match status" value="1"/>
</dbReference>
<dbReference type="InterPro" id="IPR005551">
    <property type="entry name" value="CitX"/>
</dbReference>
<dbReference type="NCBIfam" id="TIGR03124">
    <property type="entry name" value="citrate_citX"/>
    <property type="match status" value="1"/>
</dbReference>
<dbReference type="NCBIfam" id="NF002383">
    <property type="entry name" value="PRK01392.1"/>
    <property type="match status" value="1"/>
</dbReference>
<dbReference type="Pfam" id="PF03802">
    <property type="entry name" value="CitX"/>
    <property type="match status" value="1"/>
</dbReference>
<evidence type="ECO:0000255" key="1">
    <source>
        <dbReference type="HAMAP-Rule" id="MF_00398"/>
    </source>
</evidence>
<protein>
    <recommendedName>
        <fullName>Apo-citrate lyase phosphoribosyl-dephospho-CoA transferase</fullName>
        <ecNumber evidence="1">2.7.7.61</ecNumber>
    </recommendedName>
    <alternativeName>
        <fullName evidence="1">Apo-ACP nucleodityltransferase</fullName>
    </alternativeName>
    <alternativeName>
        <fullName evidence="1">Holo-ACP synthase</fullName>
    </alternativeName>
    <alternativeName>
        <fullName evidence="1">Holo-citrate lyase synthase</fullName>
    </alternativeName>
</protein>
<sequence>MHLLPELASHHAVSIPELLVSRDERQARQHAWLKRHPVPLVSFTVVAPGPIKDSEVTRRIFNHGVTALRALAAKQGWQIQEQAALVSASGPEGMLSIAAPARDLKLATIELEHSHPLGRLWDIDVLTPEGDILSRRDYSLPPRRCLLCEQSAAVCARGKTHQLTDLLNRMEALLNDVDACNVN</sequence>
<proteinExistence type="inferred from homology"/>
<name>CITX_ECOL6</name>